<accession>P14522</accession>
<reference key="1">
    <citation type="journal article" date="1989" name="Biol. Chem. Hoppe-Seyler">
        <title>The hemoglobins of the adult blackbird (Turdus merula, Passeriformes). The sequence of the major (HbA) and minor component (HbD).</title>
        <authorList>
            <person name="Nothum R."/>
            <person name="Braunitzer G."/>
            <person name="Hiebl I."/>
            <person name="Kosters J."/>
            <person name="Schneeganss D."/>
        </authorList>
    </citation>
    <scope>PROTEIN SEQUENCE</scope>
</reference>
<dbReference type="PIR" id="S04000">
    <property type="entry name" value="HAHTAB"/>
</dbReference>
<dbReference type="SMR" id="P14522"/>
<dbReference type="GO" id="GO:0072562">
    <property type="term" value="C:blood microparticle"/>
    <property type="evidence" value="ECO:0007669"/>
    <property type="project" value="TreeGrafter"/>
</dbReference>
<dbReference type="GO" id="GO:0031838">
    <property type="term" value="C:haptoglobin-hemoglobin complex"/>
    <property type="evidence" value="ECO:0007669"/>
    <property type="project" value="TreeGrafter"/>
</dbReference>
<dbReference type="GO" id="GO:0005833">
    <property type="term" value="C:hemoglobin complex"/>
    <property type="evidence" value="ECO:0007669"/>
    <property type="project" value="InterPro"/>
</dbReference>
<dbReference type="GO" id="GO:0031720">
    <property type="term" value="F:haptoglobin binding"/>
    <property type="evidence" value="ECO:0007669"/>
    <property type="project" value="TreeGrafter"/>
</dbReference>
<dbReference type="GO" id="GO:0020037">
    <property type="term" value="F:heme binding"/>
    <property type="evidence" value="ECO:0007669"/>
    <property type="project" value="InterPro"/>
</dbReference>
<dbReference type="GO" id="GO:0005506">
    <property type="term" value="F:iron ion binding"/>
    <property type="evidence" value="ECO:0007669"/>
    <property type="project" value="InterPro"/>
</dbReference>
<dbReference type="GO" id="GO:0043177">
    <property type="term" value="F:organic acid binding"/>
    <property type="evidence" value="ECO:0007669"/>
    <property type="project" value="TreeGrafter"/>
</dbReference>
<dbReference type="GO" id="GO:0019825">
    <property type="term" value="F:oxygen binding"/>
    <property type="evidence" value="ECO:0007669"/>
    <property type="project" value="InterPro"/>
</dbReference>
<dbReference type="GO" id="GO:0005344">
    <property type="term" value="F:oxygen carrier activity"/>
    <property type="evidence" value="ECO:0007669"/>
    <property type="project" value="UniProtKB-KW"/>
</dbReference>
<dbReference type="GO" id="GO:0004601">
    <property type="term" value="F:peroxidase activity"/>
    <property type="evidence" value="ECO:0007669"/>
    <property type="project" value="TreeGrafter"/>
</dbReference>
<dbReference type="GO" id="GO:0042744">
    <property type="term" value="P:hydrogen peroxide catabolic process"/>
    <property type="evidence" value="ECO:0007669"/>
    <property type="project" value="TreeGrafter"/>
</dbReference>
<dbReference type="CDD" id="cd08927">
    <property type="entry name" value="Hb-alpha-like"/>
    <property type="match status" value="1"/>
</dbReference>
<dbReference type="FunFam" id="1.10.490.10:FF:000002">
    <property type="entry name" value="Hemoglobin subunit alpha"/>
    <property type="match status" value="1"/>
</dbReference>
<dbReference type="Gene3D" id="1.10.490.10">
    <property type="entry name" value="Globins"/>
    <property type="match status" value="1"/>
</dbReference>
<dbReference type="InterPro" id="IPR000971">
    <property type="entry name" value="Globin"/>
</dbReference>
<dbReference type="InterPro" id="IPR009050">
    <property type="entry name" value="Globin-like_sf"/>
</dbReference>
<dbReference type="InterPro" id="IPR012292">
    <property type="entry name" value="Globin/Proto"/>
</dbReference>
<dbReference type="InterPro" id="IPR002338">
    <property type="entry name" value="Hemoglobin_a-typ"/>
</dbReference>
<dbReference type="InterPro" id="IPR050056">
    <property type="entry name" value="Hemoglobin_oxygen_transport"/>
</dbReference>
<dbReference type="InterPro" id="IPR002339">
    <property type="entry name" value="Hemoglobin_pi"/>
</dbReference>
<dbReference type="PANTHER" id="PTHR11442">
    <property type="entry name" value="HEMOGLOBIN FAMILY MEMBER"/>
    <property type="match status" value="1"/>
</dbReference>
<dbReference type="PANTHER" id="PTHR11442:SF48">
    <property type="entry name" value="HEMOGLOBIN SUBUNIT ALPHA"/>
    <property type="match status" value="1"/>
</dbReference>
<dbReference type="Pfam" id="PF00042">
    <property type="entry name" value="Globin"/>
    <property type="match status" value="1"/>
</dbReference>
<dbReference type="PRINTS" id="PR00612">
    <property type="entry name" value="ALPHAHAEM"/>
</dbReference>
<dbReference type="PRINTS" id="PR00815">
    <property type="entry name" value="PIHAEM"/>
</dbReference>
<dbReference type="SUPFAM" id="SSF46458">
    <property type="entry name" value="Globin-like"/>
    <property type="match status" value="1"/>
</dbReference>
<dbReference type="PROSITE" id="PS01033">
    <property type="entry name" value="GLOBIN"/>
    <property type="match status" value="1"/>
</dbReference>
<protein>
    <recommendedName>
        <fullName>Hemoglobin subunit alpha-A</fullName>
    </recommendedName>
    <alternativeName>
        <fullName>Alpha-A-globin</fullName>
    </alternativeName>
    <alternativeName>
        <fullName>Hemoglobin alpha-A chain</fullName>
    </alternativeName>
</protein>
<comment type="function">
    <text>Involved in oxygen transport from the lung to the various peripheral tissues.</text>
</comment>
<comment type="subunit">
    <text>Heterotetramer of two alpha chains and two beta chains.</text>
</comment>
<comment type="tissue specificity">
    <text>Red blood cells.</text>
</comment>
<comment type="similarity">
    <text evidence="1">Belongs to the globin family.</text>
</comment>
<feature type="chain" id="PRO_0000052794" description="Hemoglobin subunit alpha-A">
    <location>
        <begin position="1"/>
        <end position="141"/>
    </location>
</feature>
<feature type="domain" description="Globin" evidence="1">
    <location>
        <begin position="1"/>
        <end position="141"/>
    </location>
</feature>
<feature type="binding site" evidence="1">
    <location>
        <position position="58"/>
    </location>
    <ligand>
        <name>O2</name>
        <dbReference type="ChEBI" id="CHEBI:15379"/>
    </ligand>
</feature>
<feature type="binding site" description="proximal binding residue" evidence="1">
    <location>
        <position position="87"/>
    </location>
    <ligand>
        <name>heme b</name>
        <dbReference type="ChEBI" id="CHEBI:60344"/>
    </ligand>
    <ligandPart>
        <name>Fe</name>
        <dbReference type="ChEBI" id="CHEBI:18248"/>
    </ligandPart>
</feature>
<name>HBA_TURME</name>
<keyword id="KW-0903">Direct protein sequencing</keyword>
<keyword id="KW-0349">Heme</keyword>
<keyword id="KW-0408">Iron</keyword>
<keyword id="KW-0479">Metal-binding</keyword>
<keyword id="KW-0561">Oxygen transport</keyword>
<keyword id="KW-0813">Transport</keyword>
<sequence length="141" mass="15047">VLSAADKTNVKSAFSKIGGQADEYGAETLERMFATYPQTKTYFPHFDLGKGSAQVKAHGKKVAAALVEAANAVDDIAGALSKLSDLHAQKLRVDPVNFKLLGQCFLVTVATHNPSLLTPEVHASLDKFLCAVGTVLTAKYR</sequence>
<evidence type="ECO:0000255" key="1">
    <source>
        <dbReference type="PROSITE-ProRule" id="PRU00238"/>
    </source>
</evidence>
<organism>
    <name type="scientific">Turdus merula</name>
    <name type="common">Common blackbird</name>
    <dbReference type="NCBI Taxonomy" id="9187"/>
    <lineage>
        <taxon>Eukaryota</taxon>
        <taxon>Metazoa</taxon>
        <taxon>Chordata</taxon>
        <taxon>Craniata</taxon>
        <taxon>Vertebrata</taxon>
        <taxon>Euteleostomi</taxon>
        <taxon>Archelosauria</taxon>
        <taxon>Archosauria</taxon>
        <taxon>Dinosauria</taxon>
        <taxon>Saurischia</taxon>
        <taxon>Theropoda</taxon>
        <taxon>Coelurosauria</taxon>
        <taxon>Aves</taxon>
        <taxon>Neognathae</taxon>
        <taxon>Neoaves</taxon>
        <taxon>Telluraves</taxon>
        <taxon>Australaves</taxon>
        <taxon>Passeriformes</taxon>
        <taxon>Turdidae</taxon>
        <taxon>Turdus</taxon>
    </lineage>
</organism>
<gene>
    <name type="primary">HBAA</name>
</gene>
<proteinExistence type="evidence at protein level"/>